<proteinExistence type="inferred from homology"/>
<accession>P9WL28</accession>
<accession>L0TDP5</accession>
<accession>Q10817</accession>
<gene>
    <name evidence="2" type="primary">dprA</name>
    <name type="ordered locus">MT2964</name>
</gene>
<keyword id="KW-1185">Reference proteome</keyword>
<reference key="1">
    <citation type="journal article" date="2002" name="J. Bacteriol.">
        <title>Whole-genome comparison of Mycobacterium tuberculosis clinical and laboratory strains.</title>
        <authorList>
            <person name="Fleischmann R.D."/>
            <person name="Alland D."/>
            <person name="Eisen J.A."/>
            <person name="Carpenter L."/>
            <person name="White O."/>
            <person name="Peterson J.D."/>
            <person name="DeBoy R.T."/>
            <person name="Dodson R.J."/>
            <person name="Gwinn M.L."/>
            <person name="Haft D.H."/>
            <person name="Hickey E.K."/>
            <person name="Kolonay J.F."/>
            <person name="Nelson W.C."/>
            <person name="Umayam L.A."/>
            <person name="Ermolaeva M.D."/>
            <person name="Salzberg S.L."/>
            <person name="Delcher A."/>
            <person name="Utterback T.R."/>
            <person name="Weidman J.F."/>
            <person name="Khouri H.M."/>
            <person name="Gill J."/>
            <person name="Mikula A."/>
            <person name="Bishai W."/>
            <person name="Jacobs W.R. Jr."/>
            <person name="Venter J.C."/>
            <person name="Fraser C.M."/>
        </authorList>
    </citation>
    <scope>NUCLEOTIDE SEQUENCE [LARGE SCALE GENOMIC DNA]</scope>
    <source>
        <strain>CDC 1551 / Oshkosh</strain>
    </source>
</reference>
<evidence type="ECO:0000250" key="1">
    <source>
        <dbReference type="UniProtKB" id="Q8DPI7"/>
    </source>
</evidence>
<evidence type="ECO:0000305" key="2"/>
<organism>
    <name type="scientific">Mycobacterium tuberculosis (strain CDC 1551 / Oshkosh)</name>
    <dbReference type="NCBI Taxonomy" id="83331"/>
    <lineage>
        <taxon>Bacteria</taxon>
        <taxon>Bacillati</taxon>
        <taxon>Actinomycetota</taxon>
        <taxon>Actinomycetes</taxon>
        <taxon>Mycobacteriales</taxon>
        <taxon>Mycobacteriaceae</taxon>
        <taxon>Mycobacterium</taxon>
        <taxon>Mycobacterium tuberculosis complex</taxon>
    </lineage>
</organism>
<dbReference type="EMBL" id="AE000516">
    <property type="protein sequence ID" value="AAK47290.1"/>
    <property type="molecule type" value="Genomic_DNA"/>
</dbReference>
<dbReference type="PIR" id="C70926">
    <property type="entry name" value="C70926"/>
</dbReference>
<dbReference type="RefSeq" id="WP_003414694.1">
    <property type="nucleotide sequence ID" value="NZ_KK341227.1"/>
</dbReference>
<dbReference type="SMR" id="P9WL28"/>
<dbReference type="KEGG" id="mtc:MT2964"/>
<dbReference type="PATRIC" id="fig|83331.31.peg.3204"/>
<dbReference type="HOGENOM" id="CLU_029601_2_1_11"/>
<dbReference type="Proteomes" id="UP000001020">
    <property type="component" value="Chromosome"/>
</dbReference>
<dbReference type="GO" id="GO:0009294">
    <property type="term" value="P:DNA-mediated transformation"/>
    <property type="evidence" value="ECO:0007669"/>
    <property type="project" value="InterPro"/>
</dbReference>
<dbReference type="Gene3D" id="3.40.50.450">
    <property type="match status" value="1"/>
</dbReference>
<dbReference type="Gene3D" id="1.10.10.10">
    <property type="entry name" value="Winged helix-like DNA-binding domain superfamily/Winged helix DNA-binding domain"/>
    <property type="match status" value="1"/>
</dbReference>
<dbReference type="InterPro" id="IPR003488">
    <property type="entry name" value="DprA"/>
</dbReference>
<dbReference type="InterPro" id="IPR041614">
    <property type="entry name" value="DprA_WH"/>
</dbReference>
<dbReference type="InterPro" id="IPR036388">
    <property type="entry name" value="WH-like_DNA-bd_sf"/>
</dbReference>
<dbReference type="NCBIfam" id="TIGR00732">
    <property type="entry name" value="dprA"/>
    <property type="match status" value="1"/>
</dbReference>
<dbReference type="PANTHER" id="PTHR43022">
    <property type="entry name" value="PROTEIN SMF"/>
    <property type="match status" value="1"/>
</dbReference>
<dbReference type="PANTHER" id="PTHR43022:SF1">
    <property type="entry name" value="PROTEIN SMF"/>
    <property type="match status" value="1"/>
</dbReference>
<dbReference type="Pfam" id="PF02481">
    <property type="entry name" value="DNA_processg_A"/>
    <property type="match status" value="1"/>
</dbReference>
<dbReference type="Pfam" id="PF17782">
    <property type="entry name" value="DprA_WH"/>
    <property type="match status" value="1"/>
</dbReference>
<dbReference type="SUPFAM" id="SSF102405">
    <property type="entry name" value="MCP/YpsA-like"/>
    <property type="match status" value="1"/>
</dbReference>
<sequence>MIDPTARAWAYLSRVAEPPCAQLAALVRCVGPVEAADRVRRGQVGNELAQHTGARREIDRAADDLELLMRRGGRLITPDDDEWPVLAFAAFSGAGARARPCGHSPLVLWALGPARLDEVAPRAAAVVGTRAATAYGEHVAADLAAGLAERDVAVVSGGAYGIDGAAHRAALDSEGITVAVLAGGFDIPYPAGHSALLHRIAQHGVLFTEYPPGVRPARHRFLTRNRLVAAVARAAVVVEAGLRSGAANTAAWARALGRVVAAVPGPVTSSASAGCHTLLRHGAELVTRADDIVEFVGHIGELAGDEPRPGAALDVLSEAERQVYEALPGRGAATIDEIAVGSGLLPAQVLGPLAILEVAGLAECRDGRWRILRAGAGQAAAKGAAARLV</sequence>
<protein>
    <recommendedName>
        <fullName>Putative DNA processing protein DprA</fullName>
    </recommendedName>
</protein>
<feature type="chain" id="PRO_0000427551" description="Putative DNA processing protein DprA">
    <location>
        <begin position="1"/>
        <end position="389"/>
    </location>
</feature>
<comment type="function">
    <text evidence="1">May help load RecA onto ssDNA (By similarity).</text>
</comment>
<comment type="similarity">
    <text evidence="2">Belongs to the DprA/Smf family.</text>
</comment>
<name>DPRA_MYCTO</name>